<proteinExistence type="inferred from homology"/>
<protein>
    <recommendedName>
        <fullName evidence="1">Eukaryotic translation initiation factor 3 subunit B</fullName>
        <shortName evidence="1">eIF3b</shortName>
    </recommendedName>
    <alternativeName>
        <fullName evidence="1">Eukaryotic translation initiation factor 3 90 kDa subunit homolog</fullName>
        <shortName evidence="1">eIF3 p90</shortName>
    </alternativeName>
    <alternativeName>
        <fullName>Translation initiation factor eIF3 p90 subunit homolog</fullName>
    </alternativeName>
</protein>
<keyword id="KW-0175">Coiled coil</keyword>
<keyword id="KW-0963">Cytoplasm</keyword>
<keyword id="KW-0396">Initiation factor</keyword>
<keyword id="KW-0648">Protein biosynthesis</keyword>
<keyword id="KW-1185">Reference proteome</keyword>
<keyword id="KW-0677">Repeat</keyword>
<keyword id="KW-0694">RNA-binding</keyword>
<keyword id="KW-0853">WD repeat</keyword>
<sequence>MTVEDNLDIDFSDLEEKYAVNADEGFESFIVVDGAPVIPQAKQAALANVMKKFFGAVGKIKEDGIFIPFDEATGKSTGFVFIEYETGEMAAAAVKSFHNKQFDKNHKLLVNKLSEVEKYGMQYDTLKTEEFVEPETEPFVEQGHLRSWLMDPQGRDQFVLHRGDTVGVFWNKKGDTLEADVDRERWTETQVYWSPTGTYLVSTHTQGVQLWGGPDWAPPICKFQHPNVKMVQFSPCEKFLVTWSNVPLVLPDDEEKRKSIPFGPADEGKQIIVWNLETRLPVRTFAMPPEKKGASMSWPILKFSPDDKYAARMIPGEQLSIYETETMSLLDKKSVKAPGIVDFEWAPALVNLEGRQKSATESVLCYWTPEIGNQTARVVLMKASNKEVLRTRNLFNVADCKIHWQDQGRFLCVKVDRHTKSKKSTFTNLEFFRLCERGVPVEVMELKDTVTNMAWEPHGDRFVTISNSDSTTNYDGPLPANRHTLSFYALERHKGTQGTWKLIKAFDKKNCNSLFWSPNGRFLITVMIEGSNSIDLDFWDMDYEGDRKHGDKDLPANLHFLGSSEHYGISALEWDPSGRFVATWSSYWRHHTENGYKIWDFRGQLQREESIDRFKHFSWRPRPPTLLSKQQKKDIRNNLEEYSRKFEEIDAMEASEASRELIMLRKRLLEEWTAWRAQTDKKLEELGLVEPEPAESEYTTIEEIKEVVVEDKEEVCE</sequence>
<organism>
    <name type="scientific">Yarrowia lipolytica (strain CLIB 122 / E 150)</name>
    <name type="common">Yeast</name>
    <name type="synonym">Candida lipolytica</name>
    <dbReference type="NCBI Taxonomy" id="284591"/>
    <lineage>
        <taxon>Eukaryota</taxon>
        <taxon>Fungi</taxon>
        <taxon>Dikarya</taxon>
        <taxon>Ascomycota</taxon>
        <taxon>Saccharomycotina</taxon>
        <taxon>Dipodascomycetes</taxon>
        <taxon>Dipodascales</taxon>
        <taxon>Dipodascales incertae sedis</taxon>
        <taxon>Yarrowia</taxon>
    </lineage>
</organism>
<accession>Q6C1H8</accession>
<comment type="function">
    <text evidence="1">RNA-binding component of the eukaryotic translation initiation factor 3 (eIF-3) complex, which is involved in protein synthesis of a specialized repertoire of mRNAs and, together with other initiation factors, stimulates binding of mRNA and methionyl-tRNAi to the 40S ribosome. The eIF-3 complex specifically targets and initiates translation of a subset of mRNAs involved in cell proliferation.</text>
</comment>
<comment type="subunit">
    <text evidence="1">Component of the eukaryotic translation initiation factor 3 (eIF-3) complex.</text>
</comment>
<comment type="subcellular location">
    <subcellularLocation>
        <location evidence="1">Cytoplasm</location>
    </subcellularLocation>
</comment>
<comment type="similarity">
    <text evidence="1">Belongs to the eIF-3 subunit B family.</text>
</comment>
<reference key="1">
    <citation type="journal article" date="2004" name="Nature">
        <title>Genome evolution in yeasts.</title>
        <authorList>
            <person name="Dujon B."/>
            <person name="Sherman D."/>
            <person name="Fischer G."/>
            <person name="Durrens P."/>
            <person name="Casaregola S."/>
            <person name="Lafontaine I."/>
            <person name="de Montigny J."/>
            <person name="Marck C."/>
            <person name="Neuveglise C."/>
            <person name="Talla E."/>
            <person name="Goffard N."/>
            <person name="Frangeul L."/>
            <person name="Aigle M."/>
            <person name="Anthouard V."/>
            <person name="Babour A."/>
            <person name="Barbe V."/>
            <person name="Barnay S."/>
            <person name="Blanchin S."/>
            <person name="Beckerich J.-M."/>
            <person name="Beyne E."/>
            <person name="Bleykasten C."/>
            <person name="Boisrame A."/>
            <person name="Boyer J."/>
            <person name="Cattolico L."/>
            <person name="Confanioleri F."/>
            <person name="de Daruvar A."/>
            <person name="Despons L."/>
            <person name="Fabre E."/>
            <person name="Fairhead C."/>
            <person name="Ferry-Dumazet H."/>
            <person name="Groppi A."/>
            <person name="Hantraye F."/>
            <person name="Hennequin C."/>
            <person name="Jauniaux N."/>
            <person name="Joyet P."/>
            <person name="Kachouri R."/>
            <person name="Kerrest A."/>
            <person name="Koszul R."/>
            <person name="Lemaire M."/>
            <person name="Lesur I."/>
            <person name="Ma L."/>
            <person name="Muller H."/>
            <person name="Nicaud J.-M."/>
            <person name="Nikolski M."/>
            <person name="Oztas S."/>
            <person name="Ozier-Kalogeropoulos O."/>
            <person name="Pellenz S."/>
            <person name="Potier S."/>
            <person name="Richard G.-F."/>
            <person name="Straub M.-L."/>
            <person name="Suleau A."/>
            <person name="Swennen D."/>
            <person name="Tekaia F."/>
            <person name="Wesolowski-Louvel M."/>
            <person name="Westhof E."/>
            <person name="Wirth B."/>
            <person name="Zeniou-Meyer M."/>
            <person name="Zivanovic Y."/>
            <person name="Bolotin-Fukuhara M."/>
            <person name="Thierry A."/>
            <person name="Bouchier C."/>
            <person name="Caudron B."/>
            <person name="Scarpelli C."/>
            <person name="Gaillardin C."/>
            <person name="Weissenbach J."/>
            <person name="Wincker P."/>
            <person name="Souciet J.-L."/>
        </authorList>
    </citation>
    <scope>NUCLEOTIDE SEQUENCE [LARGE SCALE GENOMIC DNA]</scope>
    <source>
        <strain>CLIB 122 / E 150</strain>
    </source>
</reference>
<dbReference type="EMBL" id="CR382132">
    <property type="protein sequence ID" value="CAG78293.1"/>
    <property type="molecule type" value="Genomic_DNA"/>
</dbReference>
<dbReference type="RefSeq" id="XP_505484.1">
    <property type="nucleotide sequence ID" value="XM_505484.1"/>
</dbReference>
<dbReference type="SMR" id="Q6C1H8"/>
<dbReference type="FunCoup" id="Q6C1H8">
    <property type="interactions" value="1381"/>
</dbReference>
<dbReference type="STRING" id="284591.Q6C1H8"/>
<dbReference type="EnsemblFungi" id="CAG78293">
    <property type="protein sequence ID" value="CAG78293"/>
    <property type="gene ID" value="YALI0_F16115g"/>
</dbReference>
<dbReference type="KEGG" id="yli:2908586"/>
<dbReference type="VEuPathDB" id="FungiDB:YALI0_F16115g"/>
<dbReference type="HOGENOM" id="CLU_011152_4_0_1"/>
<dbReference type="InParanoid" id="Q6C1H8"/>
<dbReference type="OMA" id="LWGGPQF"/>
<dbReference type="OrthoDB" id="109588at4891"/>
<dbReference type="Proteomes" id="UP000001300">
    <property type="component" value="Chromosome F"/>
</dbReference>
<dbReference type="GO" id="GO:0010494">
    <property type="term" value="C:cytoplasmic stress granule"/>
    <property type="evidence" value="ECO:0007669"/>
    <property type="project" value="EnsemblFungi"/>
</dbReference>
<dbReference type="GO" id="GO:0016282">
    <property type="term" value="C:eukaryotic 43S preinitiation complex"/>
    <property type="evidence" value="ECO:0007669"/>
    <property type="project" value="UniProtKB-UniRule"/>
</dbReference>
<dbReference type="GO" id="GO:0033290">
    <property type="term" value="C:eukaryotic 48S preinitiation complex"/>
    <property type="evidence" value="ECO:0007669"/>
    <property type="project" value="UniProtKB-UniRule"/>
</dbReference>
<dbReference type="GO" id="GO:0005852">
    <property type="term" value="C:eukaryotic translation initiation factor 3 complex"/>
    <property type="evidence" value="ECO:0000318"/>
    <property type="project" value="GO_Central"/>
</dbReference>
<dbReference type="GO" id="GO:0071540">
    <property type="term" value="C:eukaryotic translation initiation factor 3 complex, eIF3e"/>
    <property type="evidence" value="ECO:0007669"/>
    <property type="project" value="EnsemblFungi"/>
</dbReference>
<dbReference type="GO" id="GO:0071541">
    <property type="term" value="C:eukaryotic translation initiation factor 3 complex, eIF3m"/>
    <property type="evidence" value="ECO:0007669"/>
    <property type="project" value="EnsemblFungi"/>
</dbReference>
<dbReference type="GO" id="GO:0043614">
    <property type="term" value="C:multi-eIF complex"/>
    <property type="evidence" value="ECO:0007669"/>
    <property type="project" value="EnsemblFungi"/>
</dbReference>
<dbReference type="GO" id="GO:0042802">
    <property type="term" value="F:identical protein binding"/>
    <property type="evidence" value="ECO:0007669"/>
    <property type="project" value="EnsemblFungi"/>
</dbReference>
<dbReference type="GO" id="GO:0003723">
    <property type="term" value="F:RNA binding"/>
    <property type="evidence" value="ECO:0007669"/>
    <property type="project" value="UniProtKB-UniRule"/>
</dbReference>
<dbReference type="GO" id="GO:0003743">
    <property type="term" value="F:translation initiation factor activity"/>
    <property type="evidence" value="ECO:0007669"/>
    <property type="project" value="UniProtKB-UniRule"/>
</dbReference>
<dbReference type="GO" id="GO:0031369">
    <property type="term" value="F:translation initiation factor binding"/>
    <property type="evidence" value="ECO:0007669"/>
    <property type="project" value="InterPro"/>
</dbReference>
<dbReference type="GO" id="GO:0001732">
    <property type="term" value="P:formation of cytoplasmic translation initiation complex"/>
    <property type="evidence" value="ECO:0007669"/>
    <property type="project" value="UniProtKB-UniRule"/>
</dbReference>
<dbReference type="GO" id="GO:0006413">
    <property type="term" value="P:translational initiation"/>
    <property type="evidence" value="ECO:0000318"/>
    <property type="project" value="GO_Central"/>
</dbReference>
<dbReference type="CDD" id="cd12278">
    <property type="entry name" value="RRM_eIF3B"/>
    <property type="match status" value="1"/>
</dbReference>
<dbReference type="FunFam" id="2.130.10.10:FF:000419">
    <property type="entry name" value="Eukaryotic translation initiation factor 3 subunit B"/>
    <property type="match status" value="1"/>
</dbReference>
<dbReference type="FunFam" id="3.30.70.330:FF:000235">
    <property type="entry name" value="Eukaryotic translation initiation factor 3 subunit B"/>
    <property type="match status" value="1"/>
</dbReference>
<dbReference type="Gene3D" id="3.30.70.330">
    <property type="match status" value="1"/>
</dbReference>
<dbReference type="Gene3D" id="2.130.10.10">
    <property type="entry name" value="YVTN repeat-like/Quinoprotein amine dehydrogenase"/>
    <property type="match status" value="2"/>
</dbReference>
<dbReference type="HAMAP" id="MF_03001">
    <property type="entry name" value="eIF3b"/>
    <property type="match status" value="1"/>
</dbReference>
<dbReference type="InterPro" id="IPR011400">
    <property type="entry name" value="EIF3B"/>
</dbReference>
<dbReference type="InterPro" id="IPR034363">
    <property type="entry name" value="eIF3B_RRM"/>
</dbReference>
<dbReference type="InterPro" id="IPR012677">
    <property type="entry name" value="Nucleotide-bd_a/b_plait_sf"/>
</dbReference>
<dbReference type="InterPro" id="IPR035979">
    <property type="entry name" value="RBD_domain_sf"/>
</dbReference>
<dbReference type="InterPro" id="IPR000504">
    <property type="entry name" value="RRM_dom"/>
</dbReference>
<dbReference type="InterPro" id="IPR013979">
    <property type="entry name" value="TIF_beta_prop-like"/>
</dbReference>
<dbReference type="InterPro" id="IPR015943">
    <property type="entry name" value="WD40/YVTN_repeat-like_dom_sf"/>
</dbReference>
<dbReference type="PANTHER" id="PTHR14068">
    <property type="entry name" value="EUKARYOTIC TRANSLATION INITIATION FACTOR 3 EIF3 -RELATED"/>
    <property type="match status" value="1"/>
</dbReference>
<dbReference type="PANTHER" id="PTHR14068:SF0">
    <property type="entry name" value="EUKARYOTIC TRANSLATION INITIATION FACTOR 3 SUBUNIT B"/>
    <property type="match status" value="1"/>
</dbReference>
<dbReference type="Pfam" id="PF08662">
    <property type="entry name" value="eIF2A"/>
    <property type="match status" value="1"/>
</dbReference>
<dbReference type="Pfam" id="PF00076">
    <property type="entry name" value="RRM_1"/>
    <property type="match status" value="1"/>
</dbReference>
<dbReference type="PIRSF" id="PIRSF036424">
    <property type="entry name" value="eIF3b"/>
    <property type="match status" value="1"/>
</dbReference>
<dbReference type="SMART" id="SM00360">
    <property type="entry name" value="RRM"/>
    <property type="match status" value="1"/>
</dbReference>
<dbReference type="SUPFAM" id="SSF82171">
    <property type="entry name" value="DPP6 N-terminal domain-like"/>
    <property type="match status" value="1"/>
</dbReference>
<dbReference type="SUPFAM" id="SSF54928">
    <property type="entry name" value="RNA-binding domain, RBD"/>
    <property type="match status" value="1"/>
</dbReference>
<dbReference type="PROSITE" id="PS50102">
    <property type="entry name" value="RRM"/>
    <property type="match status" value="1"/>
</dbReference>
<name>EIF3B_YARLI</name>
<gene>
    <name evidence="1" type="primary">PRT1</name>
    <name type="ordered locus">YALI0F16115g</name>
</gene>
<evidence type="ECO:0000255" key="1">
    <source>
        <dbReference type="HAMAP-Rule" id="MF_03001"/>
    </source>
</evidence>
<feature type="chain" id="PRO_0000363827" description="Eukaryotic translation initiation factor 3 subunit B">
    <location>
        <begin position="1"/>
        <end position="717"/>
    </location>
</feature>
<feature type="domain" description="RRM" evidence="1">
    <location>
        <begin position="28"/>
        <end position="115"/>
    </location>
</feature>
<feature type="repeat" description="WD 1">
    <location>
        <begin position="183"/>
        <end position="221"/>
    </location>
</feature>
<feature type="repeat" description="WD 2">
    <location>
        <begin position="223"/>
        <end position="284"/>
    </location>
</feature>
<feature type="repeat" description="WD 3">
    <location>
        <begin position="293"/>
        <end position="332"/>
    </location>
</feature>
<feature type="repeat" description="WD 4">
    <location>
        <begin position="445"/>
        <end position="484"/>
    </location>
</feature>
<feature type="repeat" description="WD 5">
    <location>
        <begin position="506"/>
        <end position="549"/>
    </location>
</feature>
<feature type="repeat" description="WD 6">
    <location>
        <begin position="564"/>
        <end position="609"/>
    </location>
</feature>
<feature type="region of interest" description="Sufficient for interaction with PIC8" evidence="1">
    <location>
        <begin position="1"/>
        <end position="216"/>
    </location>
</feature>
<feature type="region of interest" description="Sufficient for interaction with HCR1 and TIF32" evidence="1">
    <location>
        <begin position="1"/>
        <end position="89"/>
    </location>
</feature>